<accession>B2RYG6</accession>
<feature type="initiator methionine" description="Removed" evidence="3">
    <location>
        <position position="1"/>
    </location>
</feature>
<feature type="chain" id="PRO_0000349125" description="Ubiquitin thioesterase OTUB1">
    <location>
        <begin position="2"/>
        <end position="271"/>
    </location>
</feature>
<feature type="domain" description="OTU" evidence="5">
    <location>
        <begin position="80"/>
        <end position="271"/>
    </location>
</feature>
<feature type="region of interest" description="Ubiquitin-conjugating enzyme E2 binding" evidence="3">
    <location>
        <begin position="130"/>
        <end position="138"/>
    </location>
</feature>
<feature type="region of interest" description="Ubiquitin-conjugating enzyme E2 binding" evidence="3">
    <location>
        <begin position="169"/>
        <end position="177"/>
    </location>
</feature>
<feature type="region of interest" description="Free ubiquitin binding" evidence="3">
    <location>
        <begin position="189"/>
        <end position="195"/>
    </location>
</feature>
<feature type="region of interest" description="Ubiquitin-conjugating enzyme E2 binding" evidence="3">
    <location>
        <begin position="206"/>
        <end position="213"/>
    </location>
</feature>
<feature type="region of interest" description="Free ubiquitin binding" evidence="3">
    <location>
        <begin position="214"/>
        <end position="221"/>
    </location>
</feature>
<feature type="region of interest" description="Free ubiquitin binding" evidence="3">
    <location>
        <begin position="245"/>
        <end position="251"/>
    </location>
</feature>
<feature type="active site" evidence="3">
    <location>
        <position position="88"/>
    </location>
</feature>
<feature type="active site" description="Nucleophile" evidence="3">
    <location>
        <position position="91"/>
    </location>
</feature>
<feature type="active site" evidence="3">
    <location>
        <position position="265"/>
    </location>
</feature>
<feature type="site" description="Required for proximal ubiquitin-binding" evidence="1">
    <location>
        <position position="23"/>
    </location>
</feature>
<feature type="site" description="Interacts with free ubiquitin" evidence="3">
    <location>
        <position position="221"/>
    </location>
</feature>
<feature type="site" description="Interacts with free ubiquitin" evidence="3">
    <location>
        <position position="235"/>
    </location>
</feature>
<feature type="site" description="Interacts with free ubiquitin" evidence="3">
    <location>
        <position position="237"/>
    </location>
</feature>
<feature type="site" description="Interacts with free ubiquitin" evidence="3">
    <location>
        <position position="261"/>
    </location>
</feature>
<feature type="site" description="Interacts with free ubiquitin" evidence="3">
    <location>
        <position position="266"/>
    </location>
</feature>
<feature type="modified residue" description="N-acetylalanine" evidence="3">
    <location>
        <position position="2"/>
    </location>
</feature>
<feature type="modified residue" description="Phosphoserine" evidence="3">
    <location>
        <position position="16"/>
    </location>
</feature>
<feature type="modified residue" description="Phosphotyrosine" evidence="3">
    <location>
        <position position="26"/>
    </location>
</feature>
<gene>
    <name evidence="8" type="primary">Otub1</name>
</gene>
<keyword id="KW-0007">Acetylation</keyword>
<keyword id="KW-1064">Adaptive immunity</keyword>
<keyword id="KW-0963">Cytoplasm</keyword>
<keyword id="KW-0227">DNA damage</keyword>
<keyword id="KW-0234">DNA repair</keyword>
<keyword id="KW-0378">Hydrolase</keyword>
<keyword id="KW-0391">Immunity</keyword>
<keyword id="KW-0597">Phosphoprotein</keyword>
<keyword id="KW-0645">Protease</keyword>
<keyword id="KW-1185">Reference proteome</keyword>
<keyword id="KW-0788">Thiol protease</keyword>
<keyword id="KW-0833">Ubl conjugation pathway</keyword>
<name>OTUB1_RAT</name>
<comment type="function">
    <text evidence="3">Hydrolase that can specifically remove compared to 'Lys-48'-linked conjugated ubiquitin from proteins and plays an important regulatory role at the level of protein turnover by preventing degradation (By similarity). Regulator of T-cell anergy, a phenomenon that occurs when T-cells are rendered unresponsive to antigen rechallenge and no longer respond to their cognate antigen (By similarity). Acts via its interaction with RNF128/GRAIL (By similarity). Surprisingly, it regulates RNF128-mediated ubiquitination, but does not deubiquitinate polyubiquitinated RNF128 (By similarity). Deubiquitinates estrogen receptor alpha (ESR1) (By similarity). Mediates deubiquitination of 'Lys-48'-linked polyubiquitin chains, but not 'Lys-63'-linked polyubiquitin chains (By similarity). Not able to cleave di-ubiquitin (By similarity). Also capable of removing NEDD8 from NEDD8 conjugates, but with a much lower preference compared to 'Lys-48'-linked ubiquitin (By similarity).</text>
</comment>
<comment type="function">
    <text evidence="3">Plays a key non-catalytic role in DNA repair regulation by inhibiting activity of RNF168, an E3 ubiquitin-protein ligase that promotes accumulation of 'Lys-63'-linked histone H2A and H2AX at DNA damage sites. Inhibits RNF168 independently of ubiquitin thioesterase activity by binding and inhibiting UBE2N/UBC13, the E2 partner of RNF168, thereby limiting spreading of 'Lys-63'-linked histone H2A and H2AX marks. Inhibition occurs by binding to free ubiquitin: free ubiquitin acts as an allosteric regulator that increases affinity for UBE2N/UBC13 and disrupts interaction with UBE2V1. The OTUB1-UBE2N/UBC13-free ubiquitin complex adopts a configuration that mimics a cleaved 'Lys48'-linked di-ubiquitin chain. Acts as a regulator of mTORC1 and mTORC2 complexes. When phosphorylated at Tyr-26, acts as an activator of the mTORC1 complex by mediating deubiquitination of RPTOR via a non-catalytic process: acts by binding and inhibiting the activity of the ubiquitin-conjugating enzyme E2 (UBE2D1/UBCH5A, UBE2W/UBC16 and UBE2N/UBC13), thereby preventing ubiquitination of RPTOR. Can also act as an inhibitor of the mTORC1 and mTORC2 complexes in response to amino acids by mediating non-catalytic deubiquitination of DEPTOR.</text>
</comment>
<comment type="catalytic activity">
    <reaction evidence="3">
        <text>Thiol-dependent hydrolysis of ester, thioester, amide, peptide and isopeptide bonds formed by the C-terminal Gly of ubiquitin (a 76-residue protein attached to proteins as an intracellular targeting signal).</text>
        <dbReference type="EC" id="3.4.19.12"/>
    </reaction>
</comment>
<comment type="activity regulation">
    <text evidence="3">By free ubiquitin: binding of free ubiquitin triggers conformational changes in the OTU domain and formation of a ubiquitin-binding helix in the N-terminus, promoting binding of the conjugated donor ubiquitin in UBE2N/UBC13 to OTUB1.</text>
</comment>
<comment type="subunit">
    <text evidence="3">Interacts with RNF128. Forms a ternary complex with RNF128 and USP8. Interacts with FUS and RACK1. Interacts with UBE2D1/UBCH5A, UBE2W/UBC16 and UBE2N/UBC13.</text>
</comment>
<comment type="subcellular location">
    <subcellularLocation>
        <location evidence="6">Cytoplasm</location>
    </subcellularLocation>
</comment>
<comment type="PTM">
    <text evidence="3">Phosphorylation at Tyr-26 by SRC and SRMS promotes deubiquitination of RPTOR via a non-catalytic process.</text>
</comment>
<comment type="similarity">
    <text evidence="4">Belongs to the peptidase C65 family.</text>
</comment>
<sequence>MAAEEPQQQKQEPLGSDSEGVNCLAYDEAIMAQQDRIQQEIAVQNPLVSERLELSVLYKEYAEDDNIYQQKIKDLHKKYSYIRKTRPDGNCFYRAFGFSHLEALLDDSKELQRFKAVSAKSKEDLVSQGFTEFTIEDFHNTFMDLIEQVEKQTSVADLLASFNDQSTSDYLVVYLRLLTSGYLQRESKFFEHFIEGGRTVKEFCQQEVEPMCKESDHIHIIALAQALSVSIQVEYMDRGEGGTTNPHVFPEGSEPKVYLLYRPGHYDILYK</sequence>
<reference evidence="7 9" key="1">
    <citation type="submission" date="2005-07" db="EMBL/GenBank/DDBJ databases">
        <authorList>
            <person name="Mural R.J."/>
            <person name="Adams M.D."/>
            <person name="Myers E.W."/>
            <person name="Smith H.O."/>
            <person name="Venter J.C."/>
        </authorList>
    </citation>
    <scope>NUCLEOTIDE SEQUENCE [LARGE SCALE GENOMIC DNA]</scope>
    <source>
        <strain>Brown Norway</strain>
    </source>
</reference>
<reference evidence="8" key="2">
    <citation type="journal article" date="2004" name="Genome Res.">
        <title>The status, quality, and expansion of the NIH full-length cDNA project: the Mammalian Gene Collection (MGC).</title>
        <authorList>
            <consortium name="The MGC Project Team"/>
        </authorList>
    </citation>
    <scope>NUCLEOTIDE SEQUENCE [LARGE SCALE MRNA]</scope>
    <source>
        <tissue evidence="8">Prostate</tissue>
    </source>
</reference>
<reference key="3">
    <citation type="journal article" date="2009" name="Proteomics">
        <title>Proteome profile of the mature rat olfactory bulb.</title>
        <authorList>
            <person name="Maurya D.K."/>
            <person name="Sundaram C.S."/>
            <person name="Bhargava P."/>
        </authorList>
    </citation>
    <scope>IDENTIFICATION BY MASS SPECTROMETRY</scope>
    <scope>SUBCELLULAR LOCATION</scope>
</reference>
<protein>
    <recommendedName>
        <fullName evidence="2">Ubiquitin thioesterase OTUB1</fullName>
        <ecNumber evidence="3">3.4.19.12</ecNumber>
    </recommendedName>
    <alternativeName>
        <fullName evidence="2">Deubiquitinating enzyme OTUB1</fullName>
    </alternativeName>
    <alternativeName>
        <fullName evidence="2">OTU domain-containing ubiquitin aldehyde-binding protein 1</fullName>
    </alternativeName>
    <alternativeName>
        <fullName evidence="2">Otubain-1</fullName>
    </alternativeName>
    <alternativeName>
        <fullName evidence="2">Ubiquitin-specific-processing protease OTUB1</fullName>
    </alternativeName>
</protein>
<proteinExistence type="evidence at protein level"/>
<organism>
    <name type="scientific">Rattus norvegicus</name>
    <name type="common">Rat</name>
    <dbReference type="NCBI Taxonomy" id="10116"/>
    <lineage>
        <taxon>Eukaryota</taxon>
        <taxon>Metazoa</taxon>
        <taxon>Chordata</taxon>
        <taxon>Craniata</taxon>
        <taxon>Vertebrata</taxon>
        <taxon>Euteleostomi</taxon>
        <taxon>Mammalia</taxon>
        <taxon>Eutheria</taxon>
        <taxon>Euarchontoglires</taxon>
        <taxon>Glires</taxon>
        <taxon>Rodentia</taxon>
        <taxon>Myomorpha</taxon>
        <taxon>Muroidea</taxon>
        <taxon>Muridae</taxon>
        <taxon>Murinae</taxon>
        <taxon>Rattus</taxon>
    </lineage>
</organism>
<evidence type="ECO:0000250" key="1"/>
<evidence type="ECO:0000250" key="2">
    <source>
        <dbReference type="UniProtKB" id="Q7TQI3"/>
    </source>
</evidence>
<evidence type="ECO:0000250" key="3">
    <source>
        <dbReference type="UniProtKB" id="Q96FW1"/>
    </source>
</evidence>
<evidence type="ECO:0000255" key="4"/>
<evidence type="ECO:0000255" key="5">
    <source>
        <dbReference type="PROSITE-ProRule" id="PRU00139"/>
    </source>
</evidence>
<evidence type="ECO:0000269" key="6">
    <source>
    </source>
</evidence>
<evidence type="ECO:0000305" key="7"/>
<evidence type="ECO:0000312" key="8">
    <source>
        <dbReference type="EMBL" id="AAI66771.1"/>
    </source>
</evidence>
<evidence type="ECO:0000312" key="9">
    <source>
        <dbReference type="EMBL" id="EDM12666.1"/>
    </source>
</evidence>
<dbReference type="EC" id="3.4.19.12" evidence="3"/>
<dbReference type="EMBL" id="CH473953">
    <property type="protein sequence ID" value="EDM12666.1"/>
    <property type="molecule type" value="Genomic_DNA"/>
</dbReference>
<dbReference type="EMBL" id="BC166771">
    <property type="protein sequence ID" value="AAI66771.1"/>
    <property type="molecule type" value="mRNA"/>
</dbReference>
<dbReference type="RefSeq" id="NP_001099802.1">
    <property type="nucleotide sequence ID" value="NM_001106332.1"/>
</dbReference>
<dbReference type="SMR" id="B2RYG6"/>
<dbReference type="BioGRID" id="254414">
    <property type="interactions" value="3"/>
</dbReference>
<dbReference type="FunCoup" id="B2RYG6">
    <property type="interactions" value="3810"/>
</dbReference>
<dbReference type="IntAct" id="B2RYG6">
    <property type="interactions" value="2"/>
</dbReference>
<dbReference type="MINT" id="B2RYG6"/>
<dbReference type="STRING" id="10116.ENSRNOP00000028752"/>
<dbReference type="GlyGen" id="B2RYG6">
    <property type="glycosylation" value="1 site, 1 O-linked glycan (1 site)"/>
</dbReference>
<dbReference type="iPTMnet" id="B2RYG6"/>
<dbReference type="PhosphoSitePlus" id="B2RYG6"/>
<dbReference type="SwissPalm" id="B2RYG6"/>
<dbReference type="jPOST" id="B2RYG6"/>
<dbReference type="PaxDb" id="10116-ENSRNOP00000028752"/>
<dbReference type="PeptideAtlas" id="B2RYG6"/>
<dbReference type="Ensembl" id="ENSRNOT00000101186.1">
    <property type="protein sequence ID" value="ENSRNOP00000088887.1"/>
    <property type="gene ID" value="ENSRNOG00000021175.6"/>
</dbReference>
<dbReference type="GeneID" id="293705"/>
<dbReference type="KEGG" id="rno:293705"/>
<dbReference type="UCSC" id="RGD:1311329">
    <property type="organism name" value="rat"/>
</dbReference>
<dbReference type="AGR" id="RGD:1311329"/>
<dbReference type="CTD" id="55611"/>
<dbReference type="RGD" id="1311329">
    <property type="gene designation" value="Otub1"/>
</dbReference>
<dbReference type="eggNOG" id="KOG3991">
    <property type="taxonomic scope" value="Eukaryota"/>
</dbReference>
<dbReference type="GeneTree" id="ENSGT00390000006979"/>
<dbReference type="HOGENOM" id="CLU_014832_3_0_1"/>
<dbReference type="InParanoid" id="B2RYG6"/>
<dbReference type="OrthoDB" id="18915at2759"/>
<dbReference type="PhylomeDB" id="B2RYG6"/>
<dbReference type="TreeFam" id="TF314145"/>
<dbReference type="Reactome" id="R-RNO-5689880">
    <property type="pathway name" value="Ub-specific processing proteases"/>
</dbReference>
<dbReference type="Reactome" id="R-RNO-5689896">
    <property type="pathway name" value="Ovarian tumor domain proteases"/>
</dbReference>
<dbReference type="PRO" id="PR:B2RYG6"/>
<dbReference type="Proteomes" id="UP000002494">
    <property type="component" value="Chromosome 1"/>
</dbReference>
<dbReference type="Proteomes" id="UP000234681">
    <property type="component" value="Chromosome 1"/>
</dbReference>
<dbReference type="Bgee" id="ENSRNOG00000021175">
    <property type="expression patterns" value="Expressed in frontal cortex and 19 other cell types or tissues"/>
</dbReference>
<dbReference type="GO" id="GO:0005737">
    <property type="term" value="C:cytoplasm"/>
    <property type="evidence" value="ECO:0007669"/>
    <property type="project" value="UniProtKB-SubCell"/>
</dbReference>
<dbReference type="GO" id="GO:0004843">
    <property type="term" value="F:cysteine-type deubiquitinase activity"/>
    <property type="evidence" value="ECO:0000250"/>
    <property type="project" value="UniProtKB"/>
</dbReference>
<dbReference type="GO" id="GO:0019784">
    <property type="term" value="F:deNEDDylase activity"/>
    <property type="evidence" value="ECO:0000250"/>
    <property type="project" value="UniProtKB"/>
</dbReference>
<dbReference type="GO" id="GO:0043130">
    <property type="term" value="F:ubiquitin binding"/>
    <property type="evidence" value="ECO:0000250"/>
    <property type="project" value="UniProtKB"/>
</dbReference>
<dbReference type="GO" id="GO:0031625">
    <property type="term" value="F:ubiquitin protein ligase binding"/>
    <property type="evidence" value="ECO:0000266"/>
    <property type="project" value="RGD"/>
</dbReference>
<dbReference type="GO" id="GO:0055105">
    <property type="term" value="F:ubiquitin-protein transferase inhibitor activity"/>
    <property type="evidence" value="ECO:0000250"/>
    <property type="project" value="UniProtKB"/>
</dbReference>
<dbReference type="GO" id="GO:0002250">
    <property type="term" value="P:adaptive immune response"/>
    <property type="evidence" value="ECO:0007669"/>
    <property type="project" value="UniProtKB-KW"/>
</dbReference>
<dbReference type="GO" id="GO:0071347">
    <property type="term" value="P:cellular response to interleukin-1"/>
    <property type="evidence" value="ECO:0000270"/>
    <property type="project" value="RGD"/>
</dbReference>
<dbReference type="GO" id="GO:0006974">
    <property type="term" value="P:DNA damage response"/>
    <property type="evidence" value="ECO:0000250"/>
    <property type="project" value="UniProtKB"/>
</dbReference>
<dbReference type="GO" id="GO:0006281">
    <property type="term" value="P:DNA repair"/>
    <property type="evidence" value="ECO:0007669"/>
    <property type="project" value="UniProtKB-KW"/>
</dbReference>
<dbReference type="GO" id="GO:2000780">
    <property type="term" value="P:negative regulation of double-strand break repair"/>
    <property type="evidence" value="ECO:0000250"/>
    <property type="project" value="UniProtKB"/>
</dbReference>
<dbReference type="GO" id="GO:1904263">
    <property type="term" value="P:positive regulation of TORC1 signaling"/>
    <property type="evidence" value="ECO:0000250"/>
    <property type="project" value="UniProtKB"/>
</dbReference>
<dbReference type="GO" id="GO:0016579">
    <property type="term" value="P:protein deubiquitination"/>
    <property type="evidence" value="ECO:0000250"/>
    <property type="project" value="UniProtKB"/>
</dbReference>
<dbReference type="GO" id="GO:0071108">
    <property type="term" value="P:protein K48-linked deubiquitination"/>
    <property type="evidence" value="ECO:0000250"/>
    <property type="project" value="UniProtKB"/>
</dbReference>
<dbReference type="GO" id="GO:0006508">
    <property type="term" value="P:proteolysis"/>
    <property type="evidence" value="ECO:0007669"/>
    <property type="project" value="UniProtKB-KW"/>
</dbReference>
<dbReference type="CDD" id="cd22763">
    <property type="entry name" value="OTUB1"/>
    <property type="match status" value="1"/>
</dbReference>
<dbReference type="FunFam" id="1.20.1300.20:FF:000001">
    <property type="entry name" value="Ubiquitin thioesterase OTUB1"/>
    <property type="match status" value="1"/>
</dbReference>
<dbReference type="FunFam" id="3.30.200.60:FF:000003">
    <property type="entry name" value="Ubiquitin thioesterase OTUB1"/>
    <property type="match status" value="1"/>
</dbReference>
<dbReference type="Gene3D" id="3.30.200.60">
    <property type="entry name" value="Peptidase C65 Otubain, subdomain 1"/>
    <property type="match status" value="1"/>
</dbReference>
<dbReference type="Gene3D" id="1.20.1300.20">
    <property type="entry name" value="Peptidase C65 Otubain, subdomain 2"/>
    <property type="match status" value="1"/>
</dbReference>
<dbReference type="InterPro" id="IPR003323">
    <property type="entry name" value="OTU_dom"/>
</dbReference>
<dbReference type="InterPro" id="IPR016615">
    <property type="entry name" value="Otubain"/>
</dbReference>
<dbReference type="InterPro" id="IPR038765">
    <property type="entry name" value="Papain-like_cys_pep_sf"/>
</dbReference>
<dbReference type="InterPro" id="IPR019400">
    <property type="entry name" value="Peptidase_C65_otubain"/>
</dbReference>
<dbReference type="InterPro" id="IPR042468">
    <property type="entry name" value="Peptidase_C65_otubain_sub1"/>
</dbReference>
<dbReference type="InterPro" id="IPR042467">
    <property type="entry name" value="Peptidase_C65_otubain_sub2"/>
</dbReference>
<dbReference type="PANTHER" id="PTHR12931:SF19">
    <property type="entry name" value="UBIQUITIN THIOESTERASE OTUB1"/>
    <property type="match status" value="1"/>
</dbReference>
<dbReference type="PANTHER" id="PTHR12931">
    <property type="entry name" value="UBIQUITIN THIOLESTERASE PROTEIN OTUB"/>
    <property type="match status" value="1"/>
</dbReference>
<dbReference type="Pfam" id="PF10275">
    <property type="entry name" value="Peptidase_C65"/>
    <property type="match status" value="1"/>
</dbReference>
<dbReference type="PIRSF" id="PIRSF013503">
    <property type="entry name" value="Ubiquitin_thioesterase_Otubain"/>
    <property type="match status" value="1"/>
</dbReference>
<dbReference type="SUPFAM" id="SSF54001">
    <property type="entry name" value="Cysteine proteinases"/>
    <property type="match status" value="1"/>
</dbReference>
<dbReference type="PROSITE" id="PS50802">
    <property type="entry name" value="OTU"/>
    <property type="match status" value="1"/>
</dbReference>